<comment type="function">
    <text evidence="1">Catalyzes the reversible adenylation of nicotinate mononucleotide (NaMN) to nicotinic acid adenine dinucleotide (NaAD).</text>
</comment>
<comment type="catalytic activity">
    <reaction evidence="1">
        <text>nicotinate beta-D-ribonucleotide + ATP + H(+) = deamido-NAD(+) + diphosphate</text>
        <dbReference type="Rhea" id="RHEA:22860"/>
        <dbReference type="ChEBI" id="CHEBI:15378"/>
        <dbReference type="ChEBI" id="CHEBI:30616"/>
        <dbReference type="ChEBI" id="CHEBI:33019"/>
        <dbReference type="ChEBI" id="CHEBI:57502"/>
        <dbReference type="ChEBI" id="CHEBI:58437"/>
        <dbReference type="EC" id="2.7.7.18"/>
    </reaction>
</comment>
<comment type="pathway">
    <text evidence="1">Cofactor biosynthesis; NAD(+) biosynthesis; deamido-NAD(+) from nicotinate D-ribonucleotide: step 1/1.</text>
</comment>
<comment type="similarity">
    <text evidence="1">Belongs to the NadD family.</text>
</comment>
<accession>Q97JL2</accession>
<dbReference type="EC" id="2.7.7.18" evidence="1"/>
<dbReference type="EMBL" id="AE001437">
    <property type="protein sequence ID" value="AAK79233.1"/>
    <property type="molecule type" value="Genomic_DNA"/>
</dbReference>
<dbReference type="PIR" id="F97055">
    <property type="entry name" value="F97055"/>
</dbReference>
<dbReference type="RefSeq" id="NP_347893.1">
    <property type="nucleotide sequence ID" value="NC_003030.1"/>
</dbReference>
<dbReference type="RefSeq" id="WP_010964574.1">
    <property type="nucleotide sequence ID" value="NC_003030.1"/>
</dbReference>
<dbReference type="SMR" id="Q97JL2"/>
<dbReference type="STRING" id="272562.CA_C1262"/>
<dbReference type="GeneID" id="44997769"/>
<dbReference type="KEGG" id="cac:CA_C1262"/>
<dbReference type="PATRIC" id="fig|272562.8.peg.1462"/>
<dbReference type="eggNOG" id="COG1057">
    <property type="taxonomic scope" value="Bacteria"/>
</dbReference>
<dbReference type="HOGENOM" id="CLU_069765_0_1_9"/>
<dbReference type="OrthoDB" id="5295945at2"/>
<dbReference type="UniPathway" id="UPA00253">
    <property type="reaction ID" value="UER00332"/>
</dbReference>
<dbReference type="Proteomes" id="UP000000814">
    <property type="component" value="Chromosome"/>
</dbReference>
<dbReference type="GO" id="GO:0005524">
    <property type="term" value="F:ATP binding"/>
    <property type="evidence" value="ECO:0007669"/>
    <property type="project" value="UniProtKB-KW"/>
</dbReference>
<dbReference type="GO" id="GO:0004515">
    <property type="term" value="F:nicotinate-nucleotide adenylyltransferase activity"/>
    <property type="evidence" value="ECO:0007669"/>
    <property type="project" value="UniProtKB-UniRule"/>
</dbReference>
<dbReference type="GO" id="GO:0009435">
    <property type="term" value="P:NAD biosynthetic process"/>
    <property type="evidence" value="ECO:0007669"/>
    <property type="project" value="UniProtKB-UniRule"/>
</dbReference>
<dbReference type="CDD" id="cd02165">
    <property type="entry name" value="NMNAT"/>
    <property type="match status" value="1"/>
</dbReference>
<dbReference type="Gene3D" id="3.40.50.620">
    <property type="entry name" value="HUPs"/>
    <property type="match status" value="1"/>
</dbReference>
<dbReference type="HAMAP" id="MF_00244">
    <property type="entry name" value="NaMN_adenylyltr"/>
    <property type="match status" value="1"/>
</dbReference>
<dbReference type="InterPro" id="IPR004821">
    <property type="entry name" value="Cyt_trans-like"/>
</dbReference>
<dbReference type="InterPro" id="IPR005248">
    <property type="entry name" value="NadD/NMNAT"/>
</dbReference>
<dbReference type="InterPro" id="IPR014729">
    <property type="entry name" value="Rossmann-like_a/b/a_fold"/>
</dbReference>
<dbReference type="NCBIfam" id="TIGR00125">
    <property type="entry name" value="cyt_tran_rel"/>
    <property type="match status" value="1"/>
</dbReference>
<dbReference type="NCBIfam" id="TIGR00482">
    <property type="entry name" value="nicotinate (nicotinamide) nucleotide adenylyltransferase"/>
    <property type="match status" value="1"/>
</dbReference>
<dbReference type="NCBIfam" id="NF000840">
    <property type="entry name" value="PRK00071.1-3"/>
    <property type="match status" value="1"/>
</dbReference>
<dbReference type="PANTHER" id="PTHR39321">
    <property type="entry name" value="NICOTINATE-NUCLEOTIDE ADENYLYLTRANSFERASE-RELATED"/>
    <property type="match status" value="1"/>
</dbReference>
<dbReference type="PANTHER" id="PTHR39321:SF3">
    <property type="entry name" value="PHOSPHOPANTETHEINE ADENYLYLTRANSFERASE"/>
    <property type="match status" value="1"/>
</dbReference>
<dbReference type="Pfam" id="PF01467">
    <property type="entry name" value="CTP_transf_like"/>
    <property type="match status" value="1"/>
</dbReference>
<dbReference type="SUPFAM" id="SSF52374">
    <property type="entry name" value="Nucleotidylyl transferase"/>
    <property type="match status" value="1"/>
</dbReference>
<reference key="1">
    <citation type="journal article" date="2001" name="J. Bacteriol.">
        <title>Genome sequence and comparative analysis of the solvent-producing bacterium Clostridium acetobutylicum.</title>
        <authorList>
            <person name="Noelling J."/>
            <person name="Breton G."/>
            <person name="Omelchenko M.V."/>
            <person name="Makarova K.S."/>
            <person name="Zeng Q."/>
            <person name="Gibson R."/>
            <person name="Lee H.M."/>
            <person name="Dubois J."/>
            <person name="Qiu D."/>
            <person name="Hitti J."/>
            <person name="Wolf Y.I."/>
            <person name="Tatusov R.L."/>
            <person name="Sabathe F."/>
            <person name="Doucette-Stamm L.A."/>
            <person name="Soucaille P."/>
            <person name="Daly M.J."/>
            <person name="Bennett G.N."/>
            <person name="Koonin E.V."/>
            <person name="Smith D.R."/>
        </authorList>
    </citation>
    <scope>NUCLEOTIDE SEQUENCE [LARGE SCALE GENOMIC DNA]</scope>
    <source>
        <strain>ATCC 824 / DSM 792 / JCM 1419 / IAM 19013 / LMG 5710 / NBRC 13948 / NRRL B-527 / VKM B-1787 / 2291 / W</strain>
    </source>
</reference>
<evidence type="ECO:0000255" key="1">
    <source>
        <dbReference type="HAMAP-Rule" id="MF_00244"/>
    </source>
</evidence>
<keyword id="KW-0067">ATP-binding</keyword>
<keyword id="KW-0520">NAD</keyword>
<keyword id="KW-0547">Nucleotide-binding</keyword>
<keyword id="KW-0548">Nucleotidyltransferase</keyword>
<keyword id="KW-0662">Pyridine nucleotide biosynthesis</keyword>
<keyword id="KW-1185">Reference proteome</keyword>
<keyword id="KW-0808">Transferase</keyword>
<sequence length="200" mass="23412">MKKKAIFGGTFNPIHNAHLNIAAKSIEKLQLDELIFVPSGNPPHKSEKGIAPAELRYEMVKEAIKDNCKFRIDDYEIKKKGISYTYETLEHFSRSQKDVDWFFIAGLDSLMDLDKWRNVNTILSLCKFIVFNRSGYNKSQVLEQKEYLEKKYINNIVFLDIKPIDISSTIIRQKIRENEYIGDLVPEKIYDIIKKNKLYV</sequence>
<protein>
    <recommendedName>
        <fullName evidence="1">Probable nicotinate-nucleotide adenylyltransferase</fullName>
        <ecNumber evidence="1">2.7.7.18</ecNumber>
    </recommendedName>
    <alternativeName>
        <fullName evidence="1">Deamido-NAD(+) diphosphorylase</fullName>
    </alternativeName>
    <alternativeName>
        <fullName evidence="1">Deamido-NAD(+) pyrophosphorylase</fullName>
    </alternativeName>
    <alternativeName>
        <fullName evidence="1">Nicotinate mononucleotide adenylyltransferase</fullName>
        <shortName evidence="1">NaMN adenylyltransferase</shortName>
    </alternativeName>
</protein>
<name>NADD_CLOAB</name>
<gene>
    <name evidence="1" type="primary">nadD</name>
    <name type="ordered locus">CA_C1262</name>
</gene>
<organism>
    <name type="scientific">Clostridium acetobutylicum (strain ATCC 824 / DSM 792 / JCM 1419 / IAM 19013 / LMG 5710 / NBRC 13948 / NRRL B-527 / VKM B-1787 / 2291 / W)</name>
    <dbReference type="NCBI Taxonomy" id="272562"/>
    <lineage>
        <taxon>Bacteria</taxon>
        <taxon>Bacillati</taxon>
        <taxon>Bacillota</taxon>
        <taxon>Clostridia</taxon>
        <taxon>Eubacteriales</taxon>
        <taxon>Clostridiaceae</taxon>
        <taxon>Clostridium</taxon>
    </lineage>
</organism>
<feature type="chain" id="PRO_0000181402" description="Probable nicotinate-nucleotide adenylyltransferase">
    <location>
        <begin position="1"/>
        <end position="200"/>
    </location>
</feature>
<proteinExistence type="inferred from homology"/>